<feature type="chain" id="PRO_0000058013" description="Luc7-like protein 3">
    <location>
        <begin position="1"/>
        <end position="432"/>
    </location>
</feature>
<feature type="region of interest" description="Disordered" evidence="2">
    <location>
        <begin position="234"/>
        <end position="432"/>
    </location>
</feature>
<feature type="coiled-coil region" evidence="1">
    <location>
        <begin position="124"/>
        <end position="181"/>
    </location>
</feature>
<feature type="compositionally biased region" description="Basic and acidic residues" evidence="2">
    <location>
        <begin position="234"/>
        <end position="287"/>
    </location>
</feature>
<feature type="compositionally biased region" description="Basic residues" evidence="2">
    <location>
        <begin position="288"/>
        <end position="301"/>
    </location>
</feature>
<feature type="compositionally biased region" description="Basic and acidic residues" evidence="2">
    <location>
        <begin position="302"/>
        <end position="311"/>
    </location>
</feature>
<feature type="compositionally biased region" description="Basic residues" evidence="2">
    <location>
        <begin position="312"/>
        <end position="367"/>
    </location>
</feature>
<feature type="compositionally biased region" description="Basic and acidic residues" evidence="2">
    <location>
        <begin position="368"/>
        <end position="414"/>
    </location>
</feature>
<feature type="compositionally biased region" description="Basic and acidic residues" evidence="2">
    <location>
        <begin position="421"/>
        <end position="432"/>
    </location>
</feature>
<feature type="modified residue" description="N-acetylmethionine" evidence="14 17 19 20">
    <location>
        <position position="1"/>
    </location>
</feature>
<feature type="modified residue" description="Phosphoserine" evidence="17">
    <location>
        <position position="3"/>
    </location>
</feature>
<feature type="modified residue" description="Phosphoserine" evidence="12 21">
    <location>
        <position position="110"/>
    </location>
</feature>
<feature type="modified residue" description="Phosphoserine" evidence="21">
    <location>
        <position position="115"/>
    </location>
</feature>
<feature type="modified residue" description="N6-acetyllysine" evidence="15">
    <location>
        <position position="231"/>
    </location>
</feature>
<feature type="modified residue" description="Phosphoserine" evidence="18">
    <location>
        <position position="420"/>
    </location>
</feature>
<feature type="modified residue" description="Phosphoserine" evidence="13 16 17 18 21">
    <location>
        <position position="425"/>
    </location>
</feature>
<feature type="modified residue" description="Phosphoserine" evidence="13 17 21">
    <location>
        <position position="431"/>
    </location>
</feature>
<feature type="cross-link" description="Glycyl lysine isopeptide (Lys-Gly) (interchain with G-Cter in SUMO1); alternate" evidence="22">
    <location>
        <position position="424"/>
    </location>
</feature>
<feature type="cross-link" description="Glycyl lysine isopeptide (Lys-Gly) (interchain with G-Cter in SUMO2); alternate" evidence="23">
    <location>
        <position position="424"/>
    </location>
</feature>
<feature type="splice variant" id="VSP_018136" description="In isoform 2." evidence="10">
    <original>GPCEKIHDENLRKQYEKSSRFMKV</original>
    <variation>DVFGRGDNISDVSKFLEDDKWMEE</variation>
    <location>
        <begin position="56"/>
        <end position="79"/>
    </location>
</feature>
<feature type="splice variant" id="VSP_018137" description="In isoform 2." evidence="10">
    <location>
        <begin position="80"/>
        <end position="432"/>
    </location>
</feature>
<feature type="sequence conflict" description="In Ref. 3; BAA91981." evidence="11" ref="3">
    <original>H</original>
    <variation>Y</variation>
    <location>
        <position position="217"/>
    </location>
</feature>
<feature type="sequence conflict" description="In Ref. 6; AAC79807." evidence="11" ref="6">
    <original>EK</original>
    <variation>HE</variation>
    <location>
        <begin position="378"/>
        <end position="379"/>
    </location>
</feature>
<dbReference type="EMBL" id="AB034205">
    <property type="protein sequence ID" value="BAA90542.1"/>
    <property type="molecule type" value="mRNA"/>
</dbReference>
<dbReference type="EMBL" id="DQ013876">
    <property type="protein sequence ID" value="AAY26238.1"/>
    <property type="molecule type" value="mRNA"/>
</dbReference>
<dbReference type="EMBL" id="AK001925">
    <property type="protein sequence ID" value="BAA91981.1"/>
    <property type="molecule type" value="mRNA"/>
</dbReference>
<dbReference type="EMBL" id="AK023672">
    <property type="protein sequence ID" value="BAG51216.1"/>
    <property type="molecule type" value="mRNA"/>
</dbReference>
<dbReference type="EMBL" id="CH471109">
    <property type="protein sequence ID" value="EAW94583.1"/>
    <property type="molecule type" value="Genomic_DNA"/>
</dbReference>
<dbReference type="EMBL" id="CH471109">
    <property type="protein sequence ID" value="EAW94585.1"/>
    <property type="molecule type" value="Genomic_DNA"/>
</dbReference>
<dbReference type="EMBL" id="CH471109">
    <property type="protein sequence ID" value="EAW94587.1"/>
    <property type="molecule type" value="Genomic_DNA"/>
</dbReference>
<dbReference type="EMBL" id="BC056409">
    <property type="protein sequence ID" value="AAH56409.1"/>
    <property type="molecule type" value="mRNA"/>
</dbReference>
<dbReference type="EMBL" id="AF069250">
    <property type="protein sequence ID" value="AAC79807.1"/>
    <property type="status" value="ALT_SEQ"/>
    <property type="molecule type" value="mRNA"/>
</dbReference>
<dbReference type="CCDS" id="CCDS11573.1">
    <molecule id="O95232-1"/>
</dbReference>
<dbReference type="RefSeq" id="NP_006098.2">
    <molecule id="O95232-1"/>
    <property type="nucleotide sequence ID" value="NM_006107.3"/>
</dbReference>
<dbReference type="RefSeq" id="NP_057508.2">
    <molecule id="O95232-1"/>
    <property type="nucleotide sequence ID" value="NM_016424.4"/>
</dbReference>
<dbReference type="SMR" id="O95232"/>
<dbReference type="BioGRID" id="119710">
    <property type="interactions" value="193"/>
</dbReference>
<dbReference type="CORUM" id="O95232"/>
<dbReference type="FunCoup" id="O95232">
    <property type="interactions" value="4101"/>
</dbReference>
<dbReference type="IntAct" id="O95232">
    <property type="interactions" value="49"/>
</dbReference>
<dbReference type="MINT" id="O95232"/>
<dbReference type="STRING" id="9606.ENSP00000376919"/>
<dbReference type="CarbonylDB" id="O95232"/>
<dbReference type="GlyGen" id="O95232">
    <property type="glycosylation" value="3 sites, 1 O-linked glycan (3 sites)"/>
</dbReference>
<dbReference type="iPTMnet" id="O95232"/>
<dbReference type="PhosphoSitePlus" id="O95232"/>
<dbReference type="SwissPalm" id="O95232"/>
<dbReference type="BioMuta" id="LUC7L3"/>
<dbReference type="jPOST" id="O95232"/>
<dbReference type="MassIVE" id="O95232"/>
<dbReference type="PaxDb" id="9606-ENSP00000425092"/>
<dbReference type="PeptideAtlas" id="O95232"/>
<dbReference type="ProteomicsDB" id="50730">
    <molecule id="O95232-1"/>
</dbReference>
<dbReference type="ProteomicsDB" id="50731">
    <molecule id="O95232-2"/>
</dbReference>
<dbReference type="Pumba" id="O95232"/>
<dbReference type="Antibodypedia" id="18160">
    <property type="antibodies" value="97 antibodies from 24 providers"/>
</dbReference>
<dbReference type="DNASU" id="51747"/>
<dbReference type="Ensembl" id="ENST00000240304.5">
    <molecule id="O95232-1"/>
    <property type="protein sequence ID" value="ENSP00000240304.1"/>
    <property type="gene ID" value="ENSG00000108848.16"/>
</dbReference>
<dbReference type="Ensembl" id="ENST00000505658.6">
    <molecule id="O95232-1"/>
    <property type="protein sequence ID" value="ENSP00000425092.1"/>
    <property type="gene ID" value="ENSG00000108848.16"/>
</dbReference>
<dbReference type="GeneID" id="51747"/>
<dbReference type="KEGG" id="hsa:51747"/>
<dbReference type="MANE-Select" id="ENST00000505658.6">
    <property type="protein sequence ID" value="ENSP00000425092.1"/>
    <property type="RefSeq nucleotide sequence ID" value="NM_016424.5"/>
    <property type="RefSeq protein sequence ID" value="NP_057508.2"/>
</dbReference>
<dbReference type="UCSC" id="uc002isr.4">
    <molecule id="O95232-1"/>
    <property type="organism name" value="human"/>
</dbReference>
<dbReference type="AGR" id="HGNC:24309"/>
<dbReference type="CTD" id="51747"/>
<dbReference type="DisGeNET" id="51747"/>
<dbReference type="GeneCards" id="LUC7L3"/>
<dbReference type="HGNC" id="HGNC:24309">
    <property type="gene designation" value="LUC7L3"/>
</dbReference>
<dbReference type="HPA" id="ENSG00000108848">
    <property type="expression patterns" value="Low tissue specificity"/>
</dbReference>
<dbReference type="MIM" id="609434">
    <property type="type" value="gene"/>
</dbReference>
<dbReference type="neXtProt" id="NX_O95232"/>
<dbReference type="OpenTargets" id="ENSG00000108848"/>
<dbReference type="PharmGKB" id="PA165432062"/>
<dbReference type="VEuPathDB" id="HostDB:ENSG00000108848"/>
<dbReference type="eggNOG" id="KOG0796">
    <property type="taxonomic scope" value="Eukaryota"/>
</dbReference>
<dbReference type="GeneTree" id="ENSGT00950000183213"/>
<dbReference type="HOGENOM" id="CLU_030397_0_1_1"/>
<dbReference type="InParanoid" id="O95232"/>
<dbReference type="OMA" id="PCTRIHD"/>
<dbReference type="OrthoDB" id="10266921at2759"/>
<dbReference type="PAN-GO" id="O95232">
    <property type="GO annotations" value="4 GO annotations based on evolutionary models"/>
</dbReference>
<dbReference type="PhylomeDB" id="O95232"/>
<dbReference type="TreeFam" id="TF354312"/>
<dbReference type="PathwayCommons" id="O95232"/>
<dbReference type="Reactome" id="R-HSA-72163">
    <property type="pathway name" value="mRNA Splicing - Major Pathway"/>
</dbReference>
<dbReference type="SignaLink" id="O95232"/>
<dbReference type="BioGRID-ORCS" id="51747">
    <property type="hits" value="819 hits in 1163 CRISPR screens"/>
</dbReference>
<dbReference type="CD-CODE" id="804901D1">
    <property type="entry name" value="Nuclear speckle"/>
</dbReference>
<dbReference type="CD-CODE" id="91857CE7">
    <property type="entry name" value="Nucleolus"/>
</dbReference>
<dbReference type="ChiTaRS" id="LUC7L3">
    <property type="organism name" value="human"/>
</dbReference>
<dbReference type="GeneWiki" id="CROP_(gene)"/>
<dbReference type="GenomeRNAi" id="51747"/>
<dbReference type="Pharos" id="O95232">
    <property type="development level" value="Tbio"/>
</dbReference>
<dbReference type="PRO" id="PR:O95232"/>
<dbReference type="Proteomes" id="UP000005640">
    <property type="component" value="Chromosome 17"/>
</dbReference>
<dbReference type="RNAct" id="O95232">
    <property type="molecule type" value="protein"/>
</dbReference>
<dbReference type="Bgee" id="ENSG00000108848">
    <property type="expression patterns" value="Expressed in pylorus and 211 other cell types or tissues"/>
</dbReference>
<dbReference type="ExpressionAtlas" id="O95232">
    <property type="expression patterns" value="baseline and differential"/>
</dbReference>
<dbReference type="GO" id="GO:0016607">
    <property type="term" value="C:nuclear speck"/>
    <property type="evidence" value="ECO:0000314"/>
    <property type="project" value="HPA"/>
</dbReference>
<dbReference type="GO" id="GO:0005654">
    <property type="term" value="C:nucleoplasm"/>
    <property type="evidence" value="ECO:0000314"/>
    <property type="project" value="HPA"/>
</dbReference>
<dbReference type="GO" id="GO:0005634">
    <property type="term" value="C:nucleus"/>
    <property type="evidence" value="ECO:0000314"/>
    <property type="project" value="UniProtKB"/>
</dbReference>
<dbReference type="GO" id="GO:0005685">
    <property type="term" value="C:U1 snRNP"/>
    <property type="evidence" value="ECO:0000318"/>
    <property type="project" value="GO_Central"/>
</dbReference>
<dbReference type="GO" id="GO:0071004">
    <property type="term" value="C:U2-type prespliceosome"/>
    <property type="evidence" value="ECO:0000318"/>
    <property type="project" value="GO_Central"/>
</dbReference>
<dbReference type="GO" id="GO:0003677">
    <property type="term" value="F:DNA binding"/>
    <property type="evidence" value="ECO:0007669"/>
    <property type="project" value="UniProtKB-KW"/>
</dbReference>
<dbReference type="GO" id="GO:0003729">
    <property type="term" value="F:mRNA binding"/>
    <property type="evidence" value="ECO:0000315"/>
    <property type="project" value="UniProtKB"/>
</dbReference>
<dbReference type="GO" id="GO:0003723">
    <property type="term" value="F:RNA binding"/>
    <property type="evidence" value="ECO:0007005"/>
    <property type="project" value="UniProtKB"/>
</dbReference>
<dbReference type="GO" id="GO:0006376">
    <property type="term" value="P:mRNA splice site recognition"/>
    <property type="evidence" value="ECO:0000318"/>
    <property type="project" value="GO_Central"/>
</dbReference>
<dbReference type="GO" id="GO:0008380">
    <property type="term" value="P:RNA splicing"/>
    <property type="evidence" value="ECO:0000315"/>
    <property type="project" value="UniProtKB"/>
</dbReference>
<dbReference type="InterPro" id="IPR004882">
    <property type="entry name" value="Luc7-rel"/>
</dbReference>
<dbReference type="PANTHER" id="PTHR12375">
    <property type="entry name" value="RNA-BINDING PROTEIN LUC7-RELATED"/>
    <property type="match status" value="1"/>
</dbReference>
<dbReference type="Pfam" id="PF03194">
    <property type="entry name" value="LUC7"/>
    <property type="match status" value="1"/>
</dbReference>
<evidence type="ECO:0000255" key="1"/>
<evidence type="ECO:0000256" key="2">
    <source>
        <dbReference type="SAM" id="MobiDB-lite"/>
    </source>
</evidence>
<evidence type="ECO:0000269" key="3">
    <source>
    </source>
</evidence>
<evidence type="ECO:0000269" key="4">
    <source>
    </source>
</evidence>
<evidence type="ECO:0000269" key="5">
    <source>
    </source>
</evidence>
<evidence type="ECO:0000269" key="6">
    <source>
    </source>
</evidence>
<evidence type="ECO:0000269" key="7">
    <source>
    </source>
</evidence>
<evidence type="ECO:0000269" key="8">
    <source>
    </source>
</evidence>
<evidence type="ECO:0000269" key="9">
    <source>
    </source>
</evidence>
<evidence type="ECO:0000303" key="10">
    <source>
    </source>
</evidence>
<evidence type="ECO:0000305" key="11"/>
<evidence type="ECO:0007744" key="12">
    <source>
    </source>
</evidence>
<evidence type="ECO:0007744" key="13">
    <source>
    </source>
</evidence>
<evidence type="ECO:0007744" key="14">
    <source>
    </source>
</evidence>
<evidence type="ECO:0007744" key="15">
    <source>
    </source>
</evidence>
<evidence type="ECO:0007744" key="16">
    <source>
    </source>
</evidence>
<evidence type="ECO:0007744" key="17">
    <source>
    </source>
</evidence>
<evidence type="ECO:0007744" key="18">
    <source>
    </source>
</evidence>
<evidence type="ECO:0007744" key="19">
    <source>
    </source>
</evidence>
<evidence type="ECO:0007744" key="20">
    <source>
    </source>
</evidence>
<evidence type="ECO:0007744" key="21">
    <source>
    </source>
</evidence>
<evidence type="ECO:0007744" key="22">
    <source>
    </source>
</evidence>
<evidence type="ECO:0007744" key="23">
    <source>
    </source>
</evidence>
<keyword id="KW-0007">Acetylation</keyword>
<keyword id="KW-0025">Alternative splicing</keyword>
<keyword id="KW-0175">Coiled coil</keyword>
<keyword id="KW-0238">DNA-binding</keyword>
<keyword id="KW-1017">Isopeptide bond</keyword>
<keyword id="KW-0507">mRNA processing</keyword>
<keyword id="KW-0508">mRNA splicing</keyword>
<keyword id="KW-0539">Nucleus</keyword>
<keyword id="KW-0597">Phosphoprotein</keyword>
<keyword id="KW-1267">Proteomics identification</keyword>
<keyword id="KW-1185">Reference proteome</keyword>
<keyword id="KW-0832">Ubl conjugation</keyword>
<sequence>MISAAQLLDELMGRDRNLAPDEKRSNVRWDHESVCKYYLCGFCPAELFTNTRSDLGPCEKIHDENLRKQYEKSSRFMKVGYERDFLRYLQSLLAEVERRIRRGHARLALSQNQQSSGAAGPTGKNEEKIQVLTDKIDVLLQQIEELGSEGKVEEAQGMMKLVEQLKEERELLRSTTSTIESFAAQEKQMEVCEVCGAFLIVGDAQSRVDDHLMGKQHMGYAKIKATVEELKEKLRKRTEEPDRDERLKKEKQEREEREKEREREREERERKRRREEEEREKERARDRERRKRSRSRSRHSSRTSDRRCSRSRDHKRSRSRERRRSRSRDRRRSRSHDRSERKHRSRSRDRRRSKSRDRKSYKHRSKSRDREQDRKSKEKEKRGSDDKKSSVKSGSREKQSEDTNTESKESDTKNEVNGTSEDIKSEGDTQSN</sequence>
<gene>
    <name type="primary">LUC7L3</name>
    <name type="synonym">CREAP1</name>
    <name type="synonym">CROP</name>
    <name type="synonym">O48</name>
</gene>
<reference key="1">
    <citation type="journal article" date="2000" name="FEBS Lett.">
        <title>CROP/Luc7A, a novel serine/arginine-rich nuclear protein, isolated from cisplatin-resistant cell line.</title>
        <authorList>
            <person name="Nishii Y."/>
            <person name="Morishima M."/>
            <person name="Kakehi Y."/>
            <person name="Umehara K."/>
            <person name="Kioka N."/>
            <person name="Terano Y."/>
            <person name="Amachi T."/>
            <person name="Ueda K."/>
        </authorList>
    </citation>
    <scope>NUCLEOTIDE SEQUENCE [MRNA] (ISOFORM 1)</scope>
    <scope>SUBCELLULAR LOCATION</scope>
    <scope>TISSUE SPECIFICITY</scope>
</reference>
<reference key="2">
    <citation type="journal article" date="2006" name="Biochem. Cell Biol.">
        <title>Identification of a family of DNA-binding proteins with homology to RNA splicing factors.</title>
        <authorList>
            <person name="Shipman K.L."/>
            <person name="Robinson P.J."/>
            <person name="King B.R."/>
            <person name="Smith R."/>
            <person name="Nicholson R.C."/>
        </authorList>
    </citation>
    <scope>NUCLEOTIDE SEQUENCE [MRNA] (ISOFORM 1)</scope>
    <scope>FUNCTION</scope>
    <scope>TISSUE SPECIFICITY</scope>
    <source>
        <tissue>Placenta</tissue>
    </source>
</reference>
<reference key="3">
    <citation type="journal article" date="2004" name="Nat. Genet.">
        <title>Complete sequencing and characterization of 21,243 full-length human cDNAs.</title>
        <authorList>
            <person name="Ota T."/>
            <person name="Suzuki Y."/>
            <person name="Nishikawa T."/>
            <person name="Otsuki T."/>
            <person name="Sugiyama T."/>
            <person name="Irie R."/>
            <person name="Wakamatsu A."/>
            <person name="Hayashi K."/>
            <person name="Sato H."/>
            <person name="Nagai K."/>
            <person name="Kimura K."/>
            <person name="Makita H."/>
            <person name="Sekine M."/>
            <person name="Obayashi M."/>
            <person name="Nishi T."/>
            <person name="Shibahara T."/>
            <person name="Tanaka T."/>
            <person name="Ishii S."/>
            <person name="Yamamoto J."/>
            <person name="Saito K."/>
            <person name="Kawai Y."/>
            <person name="Isono Y."/>
            <person name="Nakamura Y."/>
            <person name="Nagahari K."/>
            <person name="Murakami K."/>
            <person name="Yasuda T."/>
            <person name="Iwayanagi T."/>
            <person name="Wagatsuma M."/>
            <person name="Shiratori A."/>
            <person name="Sudo H."/>
            <person name="Hosoiri T."/>
            <person name="Kaku Y."/>
            <person name="Kodaira H."/>
            <person name="Kondo H."/>
            <person name="Sugawara M."/>
            <person name="Takahashi M."/>
            <person name="Kanda K."/>
            <person name="Yokoi T."/>
            <person name="Furuya T."/>
            <person name="Kikkawa E."/>
            <person name="Omura Y."/>
            <person name="Abe K."/>
            <person name="Kamihara K."/>
            <person name="Katsuta N."/>
            <person name="Sato K."/>
            <person name="Tanikawa M."/>
            <person name="Yamazaki M."/>
            <person name="Ninomiya K."/>
            <person name="Ishibashi T."/>
            <person name="Yamashita H."/>
            <person name="Murakawa K."/>
            <person name="Fujimori K."/>
            <person name="Tanai H."/>
            <person name="Kimata M."/>
            <person name="Watanabe M."/>
            <person name="Hiraoka S."/>
            <person name="Chiba Y."/>
            <person name="Ishida S."/>
            <person name="Ono Y."/>
            <person name="Takiguchi S."/>
            <person name="Watanabe S."/>
            <person name="Yosida M."/>
            <person name="Hotuta T."/>
            <person name="Kusano J."/>
            <person name="Kanehori K."/>
            <person name="Takahashi-Fujii A."/>
            <person name="Hara H."/>
            <person name="Tanase T.-O."/>
            <person name="Nomura Y."/>
            <person name="Togiya S."/>
            <person name="Komai F."/>
            <person name="Hara R."/>
            <person name="Takeuchi K."/>
            <person name="Arita M."/>
            <person name="Imose N."/>
            <person name="Musashino K."/>
            <person name="Yuuki H."/>
            <person name="Oshima A."/>
            <person name="Sasaki N."/>
            <person name="Aotsuka S."/>
            <person name="Yoshikawa Y."/>
            <person name="Matsunawa H."/>
            <person name="Ichihara T."/>
            <person name="Shiohata N."/>
            <person name="Sano S."/>
            <person name="Moriya S."/>
            <person name="Momiyama H."/>
            <person name="Satoh N."/>
            <person name="Takami S."/>
            <person name="Terashima Y."/>
            <person name="Suzuki O."/>
            <person name="Nakagawa S."/>
            <person name="Senoh A."/>
            <person name="Mizoguchi H."/>
            <person name="Goto Y."/>
            <person name="Shimizu F."/>
            <person name="Wakebe H."/>
            <person name="Hishigaki H."/>
            <person name="Watanabe T."/>
            <person name="Sugiyama A."/>
            <person name="Takemoto M."/>
            <person name="Kawakami B."/>
            <person name="Yamazaki M."/>
            <person name="Watanabe K."/>
            <person name="Kumagai A."/>
            <person name="Itakura S."/>
            <person name="Fukuzumi Y."/>
            <person name="Fujimori Y."/>
            <person name="Komiyama M."/>
            <person name="Tashiro H."/>
            <person name="Tanigami A."/>
            <person name="Fujiwara T."/>
            <person name="Ono T."/>
            <person name="Yamada K."/>
            <person name="Fujii Y."/>
            <person name="Ozaki K."/>
            <person name="Hirao M."/>
            <person name="Ohmori Y."/>
            <person name="Kawabata A."/>
            <person name="Hikiji T."/>
            <person name="Kobatake N."/>
            <person name="Inagaki H."/>
            <person name="Ikema Y."/>
            <person name="Okamoto S."/>
            <person name="Okitani R."/>
            <person name="Kawakami T."/>
            <person name="Noguchi S."/>
            <person name="Itoh T."/>
            <person name="Shigeta K."/>
            <person name="Senba T."/>
            <person name="Matsumura K."/>
            <person name="Nakajima Y."/>
            <person name="Mizuno T."/>
            <person name="Morinaga M."/>
            <person name="Sasaki M."/>
            <person name="Togashi T."/>
            <person name="Oyama M."/>
            <person name="Hata H."/>
            <person name="Watanabe M."/>
            <person name="Komatsu T."/>
            <person name="Mizushima-Sugano J."/>
            <person name="Satoh T."/>
            <person name="Shirai Y."/>
            <person name="Takahashi Y."/>
            <person name="Nakagawa K."/>
            <person name="Okumura K."/>
            <person name="Nagase T."/>
            <person name="Nomura N."/>
            <person name="Kikuchi H."/>
            <person name="Masuho Y."/>
            <person name="Yamashita R."/>
            <person name="Nakai K."/>
            <person name="Yada T."/>
            <person name="Nakamura Y."/>
            <person name="Ohara O."/>
            <person name="Isogai T."/>
            <person name="Sugano S."/>
        </authorList>
    </citation>
    <scope>NUCLEOTIDE SEQUENCE [LARGE SCALE MRNA] (ISOFORM 1)</scope>
    <source>
        <tissue>Placenta</tissue>
    </source>
</reference>
<reference key="4">
    <citation type="submission" date="2005-09" db="EMBL/GenBank/DDBJ databases">
        <authorList>
            <person name="Mural R.J."/>
            <person name="Istrail S."/>
            <person name="Sutton G.G."/>
            <person name="Florea L."/>
            <person name="Halpern A.L."/>
            <person name="Mobarry C.M."/>
            <person name="Lippert R."/>
            <person name="Walenz B."/>
            <person name="Shatkay H."/>
            <person name="Dew I."/>
            <person name="Miller J.R."/>
            <person name="Flanigan M.J."/>
            <person name="Edwards N.J."/>
            <person name="Bolanos R."/>
            <person name="Fasulo D."/>
            <person name="Halldorsson B.V."/>
            <person name="Hannenhalli S."/>
            <person name="Turner R."/>
            <person name="Yooseph S."/>
            <person name="Lu F."/>
            <person name="Nusskern D.R."/>
            <person name="Shue B.C."/>
            <person name="Zheng X.H."/>
            <person name="Zhong F."/>
            <person name="Delcher A.L."/>
            <person name="Huson D.H."/>
            <person name="Kravitz S.A."/>
            <person name="Mouchard L."/>
            <person name="Reinert K."/>
            <person name="Remington K.A."/>
            <person name="Clark A.G."/>
            <person name="Waterman M.S."/>
            <person name="Eichler E.E."/>
            <person name="Adams M.D."/>
            <person name="Hunkapiller M.W."/>
            <person name="Myers E.W."/>
            <person name="Venter J.C."/>
        </authorList>
    </citation>
    <scope>NUCLEOTIDE SEQUENCE [LARGE SCALE GENOMIC DNA]</scope>
</reference>
<reference key="5">
    <citation type="journal article" date="2004" name="Genome Res.">
        <title>The status, quality, and expansion of the NIH full-length cDNA project: the Mammalian Gene Collection (MGC).</title>
        <authorList>
            <consortium name="The MGC Project Team"/>
        </authorList>
    </citation>
    <scope>NUCLEOTIDE SEQUENCE [LARGE SCALE MRNA] (ISOFORM 2)</scope>
    <source>
        <tissue>PNS</tissue>
    </source>
</reference>
<reference key="6">
    <citation type="journal article" date="2000" name="J. Biomed. Sci.">
        <title>Identification of okadaic-acid-induced genes by mRNA differential display in glioma cells.</title>
        <authorList>
            <person name="Chin L.S."/>
            <person name="Singh S.K."/>
            <person name="Wang Q."/>
            <person name="Murray S.F."/>
        </authorList>
    </citation>
    <scope>NUCLEOTIDE SEQUENCE [MRNA] OF 378-432</scope>
    <source>
        <tissue>Fetal brain</tissue>
    </source>
</reference>
<reference key="7">
    <citation type="journal article" date="2003" name="Biochem. Biophys. Res. Commun.">
        <title>Effect of cisplatin treatment on speckled distribution of a serine/arginine-rich nuclear protein CROP/Luc7A.</title>
        <authorList>
            <person name="Umehara H."/>
            <person name="Nishii Y."/>
            <person name="Morishima M."/>
            <person name="Kakehi Y."/>
            <person name="Kioka N."/>
            <person name="Amachi T."/>
            <person name="Koizumi J."/>
            <person name="Hagiwara M."/>
            <person name="Ueda K."/>
        </authorList>
    </citation>
    <scope>INTERACTION WITH SFRS1</scope>
    <scope>PHOSPHORYLATION</scope>
    <scope>SUBCELLULAR LOCATION</scope>
</reference>
<reference key="8">
    <citation type="journal article" date="2005" name="Mol. Cell. Biol.">
        <title>A novel SR-related protein is required for the second step of pre-mRNA splicing.</title>
        <authorList>
            <person name="Cazalla D."/>
            <person name="Newton K."/>
            <person name="Caceres J.F."/>
        </authorList>
    </citation>
    <scope>INTERACTION WITH RSRC1</scope>
</reference>
<reference key="9">
    <citation type="journal article" date="2007" name="Science">
        <title>ATM and ATR substrate analysis reveals extensive protein networks responsive to DNA damage.</title>
        <authorList>
            <person name="Matsuoka S."/>
            <person name="Ballif B.A."/>
            <person name="Smogorzewska A."/>
            <person name="McDonald E.R. III"/>
            <person name="Hurov K.E."/>
            <person name="Luo J."/>
            <person name="Bakalarski C.E."/>
            <person name="Zhao Z."/>
            <person name="Solimini N."/>
            <person name="Lerenthal Y."/>
            <person name="Shiloh Y."/>
            <person name="Gygi S.P."/>
            <person name="Elledge S.J."/>
        </authorList>
    </citation>
    <scope>PHOSPHORYLATION [LARGE SCALE ANALYSIS] AT SER-110</scope>
    <scope>IDENTIFICATION BY MASS SPECTROMETRY [LARGE SCALE ANALYSIS]</scope>
    <source>
        <tissue>Embryonic kidney</tissue>
    </source>
</reference>
<reference key="10">
    <citation type="journal article" date="2008" name="Mol. Cell. Biol.">
        <title>Novel splicing factor RBM25 modulates Bcl-x pre-mRNA 5' splice site selection.</title>
        <authorList>
            <person name="Zhou A."/>
            <person name="Ou A.C."/>
            <person name="Cho A."/>
            <person name="Benz E.J. Jr."/>
            <person name="Huang S.C."/>
        </authorList>
    </citation>
    <scope>INTERACTION WITH RBM25</scope>
</reference>
<reference key="11">
    <citation type="journal article" date="2008" name="Proc. Natl. Acad. Sci. U.S.A.">
        <title>A quantitative atlas of mitotic phosphorylation.</title>
        <authorList>
            <person name="Dephoure N."/>
            <person name="Zhou C."/>
            <person name="Villen J."/>
            <person name="Beausoleil S.A."/>
            <person name="Bakalarski C.E."/>
            <person name="Elledge S.J."/>
            <person name="Gygi S.P."/>
        </authorList>
    </citation>
    <scope>PHOSPHORYLATION [LARGE SCALE ANALYSIS] AT SER-425 AND SER-431</scope>
    <scope>IDENTIFICATION BY MASS SPECTROMETRY [LARGE SCALE ANALYSIS]</scope>
    <source>
        <tissue>Cervix carcinoma</tissue>
    </source>
</reference>
<reference key="12">
    <citation type="journal article" date="2009" name="Anal. Chem.">
        <title>Lys-N and trypsin cover complementary parts of the phosphoproteome in a refined SCX-based approach.</title>
        <authorList>
            <person name="Gauci S."/>
            <person name="Helbig A.O."/>
            <person name="Slijper M."/>
            <person name="Krijgsveld J."/>
            <person name="Heck A.J."/>
            <person name="Mohammed S."/>
        </authorList>
    </citation>
    <scope>ACETYLATION [LARGE SCALE ANALYSIS] AT MET-1</scope>
    <scope>IDENTIFICATION BY MASS SPECTROMETRY [LARGE SCALE ANALYSIS]</scope>
</reference>
<reference key="13">
    <citation type="journal article" date="2009" name="Sci. Signal.">
        <title>Quantitative phosphoproteomic analysis of T cell receptor signaling reveals system-wide modulation of protein-protein interactions.</title>
        <authorList>
            <person name="Mayya V."/>
            <person name="Lundgren D.H."/>
            <person name="Hwang S.-I."/>
            <person name="Rezaul K."/>
            <person name="Wu L."/>
            <person name="Eng J.K."/>
            <person name="Rodionov V."/>
            <person name="Han D.K."/>
        </authorList>
    </citation>
    <scope>PHOSPHORYLATION [LARGE SCALE ANALYSIS] AT SER-425</scope>
    <scope>IDENTIFICATION BY MASS SPECTROMETRY [LARGE SCALE ANALYSIS]</scope>
    <source>
        <tissue>Leukemic T-cell</tissue>
    </source>
</reference>
<reference key="14">
    <citation type="journal article" date="2009" name="Science">
        <title>Lysine acetylation targets protein complexes and co-regulates major cellular functions.</title>
        <authorList>
            <person name="Choudhary C."/>
            <person name="Kumar C."/>
            <person name="Gnad F."/>
            <person name="Nielsen M.L."/>
            <person name="Rehman M."/>
            <person name="Walther T.C."/>
            <person name="Olsen J.V."/>
            <person name="Mann M."/>
        </authorList>
    </citation>
    <scope>ACETYLATION [LARGE SCALE ANALYSIS] AT LYS-231</scope>
    <scope>IDENTIFICATION BY MASS SPECTROMETRY [LARGE SCALE ANALYSIS]</scope>
</reference>
<reference key="15">
    <citation type="journal article" date="2009" name="Science">
        <title>Jmjd6 catalyses lysyl-hydroxylation of U2AF65, a protein associated with RNA splicing.</title>
        <authorList>
            <person name="Webby C.J."/>
            <person name="Wolf A."/>
            <person name="Gromak N."/>
            <person name="Dreger M."/>
            <person name="Kramer H."/>
            <person name="Kessler B."/>
            <person name="Nielsen M.L."/>
            <person name="Schmitz C."/>
            <person name="Butler D.S."/>
            <person name="Yates J.R. III"/>
            <person name="Delahunty C.M."/>
            <person name="Hahn P."/>
            <person name="Lengeling A."/>
            <person name="Mann M."/>
            <person name="Proudfoot N.J."/>
            <person name="Schofield C.J."/>
            <person name="Boettger A."/>
        </authorList>
    </citation>
    <scope>INTERACTION WITH JMJD6</scope>
</reference>
<reference key="16">
    <citation type="journal article" date="2010" name="Sci. Signal.">
        <title>Quantitative phosphoproteomics reveals widespread full phosphorylation site occupancy during mitosis.</title>
        <authorList>
            <person name="Olsen J.V."/>
            <person name="Vermeulen M."/>
            <person name="Santamaria A."/>
            <person name="Kumar C."/>
            <person name="Miller M.L."/>
            <person name="Jensen L.J."/>
            <person name="Gnad F."/>
            <person name="Cox J."/>
            <person name="Jensen T.S."/>
            <person name="Nigg E.A."/>
            <person name="Brunak S."/>
            <person name="Mann M."/>
        </authorList>
    </citation>
    <scope>ACETYLATION [LARGE SCALE ANALYSIS] AT MET-1</scope>
    <scope>PHOSPHORYLATION [LARGE SCALE ANALYSIS] AT SER-3; SER-425 AND SER-431</scope>
    <scope>IDENTIFICATION BY MASS SPECTROMETRY [LARGE SCALE ANALYSIS]</scope>
    <source>
        <tissue>Cervix carcinoma</tissue>
    </source>
</reference>
<reference key="17">
    <citation type="journal article" date="2011" name="BMC Syst. Biol.">
        <title>Initial characterization of the human central proteome.</title>
        <authorList>
            <person name="Burkard T.R."/>
            <person name="Planyavsky M."/>
            <person name="Kaupe I."/>
            <person name="Breitwieser F.P."/>
            <person name="Buerckstuemmer T."/>
            <person name="Bennett K.L."/>
            <person name="Superti-Furga G."/>
            <person name="Colinge J."/>
        </authorList>
    </citation>
    <scope>IDENTIFICATION BY MASS SPECTROMETRY [LARGE SCALE ANALYSIS]</scope>
</reference>
<reference key="18">
    <citation type="journal article" date="2011" name="Sci. Signal.">
        <title>System-wide temporal characterization of the proteome and phosphoproteome of human embryonic stem cell differentiation.</title>
        <authorList>
            <person name="Rigbolt K.T."/>
            <person name="Prokhorova T.A."/>
            <person name="Akimov V."/>
            <person name="Henningsen J."/>
            <person name="Johansen P.T."/>
            <person name="Kratchmarova I."/>
            <person name="Kassem M."/>
            <person name="Mann M."/>
            <person name="Olsen J.V."/>
            <person name="Blagoev B."/>
        </authorList>
    </citation>
    <scope>PHOSPHORYLATION [LARGE SCALE ANALYSIS] AT SER-420 AND SER-425</scope>
    <scope>IDENTIFICATION BY MASS SPECTROMETRY [LARGE SCALE ANALYSIS]</scope>
</reference>
<reference key="19">
    <citation type="journal article" date="2012" name="Mol. Cell. Proteomics">
        <title>Comparative large-scale characterisation of plant vs. mammal proteins reveals similar and idiosyncratic N-alpha acetylation features.</title>
        <authorList>
            <person name="Bienvenut W.V."/>
            <person name="Sumpton D."/>
            <person name="Martinez A."/>
            <person name="Lilla S."/>
            <person name="Espagne C."/>
            <person name="Meinnel T."/>
            <person name="Giglione C."/>
        </authorList>
    </citation>
    <scope>ACETYLATION [LARGE SCALE ANALYSIS] AT MET-1</scope>
    <scope>IDENTIFICATION BY MASS SPECTROMETRY [LARGE SCALE ANALYSIS]</scope>
</reference>
<reference key="20">
    <citation type="journal article" date="2012" name="Proc. Natl. Acad. Sci. U.S.A.">
        <title>N-terminal acetylome analyses and functional insights of the N-terminal acetyltransferase NatB.</title>
        <authorList>
            <person name="Van Damme P."/>
            <person name="Lasa M."/>
            <person name="Polevoda B."/>
            <person name="Gazquez C."/>
            <person name="Elosegui-Artola A."/>
            <person name="Kim D.S."/>
            <person name="De Juan-Pardo E."/>
            <person name="Demeyer K."/>
            <person name="Hole K."/>
            <person name="Larrea E."/>
            <person name="Timmerman E."/>
            <person name="Prieto J."/>
            <person name="Arnesen T."/>
            <person name="Sherman F."/>
            <person name="Gevaert K."/>
            <person name="Aldabe R."/>
        </authorList>
    </citation>
    <scope>ACETYLATION [LARGE SCALE ANALYSIS] AT MET-1</scope>
    <scope>IDENTIFICATION BY MASS SPECTROMETRY [LARGE SCALE ANALYSIS]</scope>
</reference>
<reference key="21">
    <citation type="journal article" date="2013" name="J. Proteome Res.">
        <title>Toward a comprehensive characterization of a human cancer cell phosphoproteome.</title>
        <authorList>
            <person name="Zhou H."/>
            <person name="Di Palma S."/>
            <person name="Preisinger C."/>
            <person name="Peng M."/>
            <person name="Polat A.N."/>
            <person name="Heck A.J."/>
            <person name="Mohammed S."/>
        </authorList>
    </citation>
    <scope>PHOSPHORYLATION [LARGE SCALE ANALYSIS] AT SER-110; SER-115; SER-425 AND SER-431</scope>
    <scope>IDENTIFICATION BY MASS SPECTROMETRY [LARGE SCALE ANALYSIS]</scope>
    <source>
        <tissue>Cervix carcinoma</tissue>
        <tissue>Erythroleukemia</tissue>
    </source>
</reference>
<reference key="22">
    <citation type="journal article" date="2014" name="J. Proteomics">
        <title>An enzyme assisted RP-RPLC approach for in-depth analysis of human liver phosphoproteome.</title>
        <authorList>
            <person name="Bian Y."/>
            <person name="Song C."/>
            <person name="Cheng K."/>
            <person name="Dong M."/>
            <person name="Wang F."/>
            <person name="Huang J."/>
            <person name="Sun D."/>
            <person name="Wang L."/>
            <person name="Ye M."/>
            <person name="Zou H."/>
        </authorList>
    </citation>
    <scope>IDENTIFICATION BY MASS SPECTROMETRY [LARGE SCALE ANALYSIS]</scope>
    <source>
        <tissue>Liver</tissue>
    </source>
</reference>
<reference key="23">
    <citation type="journal article" date="2014" name="Oncogene">
        <title>RRP1B is a metastasis modifier that regulates the expression of alternative mRNA isoforms through interactions with SRSF1.</title>
        <authorList>
            <consortium name="NISC Comparative Sequencing Program"/>
            <person name="Lee M."/>
            <person name="Dworkin A.M."/>
            <person name="Gildea D."/>
            <person name="Trivedi N.S."/>
            <person name="Moorhead G.B."/>
            <person name="Crawford N.P."/>
        </authorList>
    </citation>
    <scope>INTERACTION WITH RRP1B</scope>
</reference>
<reference key="24">
    <citation type="journal article" date="2014" name="Proc. Natl. Acad. Sci. U.S.A.">
        <title>Mapping of SUMO sites and analysis of SUMOylation changes induced by external stimuli.</title>
        <authorList>
            <person name="Impens F."/>
            <person name="Radoshevich L."/>
            <person name="Cossart P."/>
            <person name="Ribet D."/>
        </authorList>
    </citation>
    <scope>SUMOYLATION [LARGE SCALE ANALYSIS] AT LYS-424</scope>
    <scope>IDENTIFICATION BY MASS SPECTROMETRY [LARGE SCALE ANALYSIS]</scope>
</reference>
<reference key="25">
    <citation type="journal article" date="2017" name="Nat. Struct. Mol. Biol.">
        <title>Site-specific mapping of the human SUMO proteome reveals co-modification with phosphorylation.</title>
        <authorList>
            <person name="Hendriks I.A."/>
            <person name="Lyon D."/>
            <person name="Young C."/>
            <person name="Jensen L.J."/>
            <person name="Vertegaal A.C."/>
            <person name="Nielsen M.L."/>
        </authorList>
    </citation>
    <scope>SUMOYLATION [LARGE SCALE ANALYSIS] AT LYS-424</scope>
    <scope>IDENTIFICATION BY MASS SPECTROMETRY [LARGE SCALE ANALYSIS]</scope>
</reference>
<proteinExistence type="evidence at protein level"/>
<accession>O95232</accession>
<accession>B3KN54</accession>
<accession>D3DTY1</accession>
<accession>Q6PHR9</accession>
<accession>Q9NUY0</accession>
<accession>Q9P2S7</accession>
<organism>
    <name type="scientific">Homo sapiens</name>
    <name type="common">Human</name>
    <dbReference type="NCBI Taxonomy" id="9606"/>
    <lineage>
        <taxon>Eukaryota</taxon>
        <taxon>Metazoa</taxon>
        <taxon>Chordata</taxon>
        <taxon>Craniata</taxon>
        <taxon>Vertebrata</taxon>
        <taxon>Euteleostomi</taxon>
        <taxon>Mammalia</taxon>
        <taxon>Eutheria</taxon>
        <taxon>Euarchontoglires</taxon>
        <taxon>Primates</taxon>
        <taxon>Haplorrhini</taxon>
        <taxon>Catarrhini</taxon>
        <taxon>Hominidae</taxon>
        <taxon>Homo</taxon>
    </lineage>
</organism>
<protein>
    <recommendedName>
        <fullName>Luc7-like protein 3</fullName>
    </recommendedName>
    <alternativeName>
        <fullName>Cisplatin resistance-associated-overexpressed protein</fullName>
    </alternativeName>
    <alternativeName>
        <fullName>Luc7A</fullName>
    </alternativeName>
    <alternativeName>
        <fullName>Okadaic acid-inducible phosphoprotein OA48-18</fullName>
    </alternativeName>
    <alternativeName>
        <fullName>cAMP regulatory element-associated protein 1</fullName>
        <shortName>CRE-associated protein 1</shortName>
        <shortName>CREAP-1</shortName>
    </alternativeName>
</protein>
<comment type="function">
    <text evidence="6">Binds cAMP regulatory element DNA sequence. May play a role in RNA splicing.</text>
</comment>
<comment type="subunit">
    <text evidence="4 5 7 8 9">May interact with SFRS1 and form homodimers (PubMed:12565863). Interacts with JMJD6 (PubMed:19574390). Interacts with RBM25 (PubMed:18663000). Interacts with RSRC1 (via Arg/Ser-rich domain) (PubMed:15798186). Interacts with RRP1B (PubMed:23604122).</text>
</comment>
<comment type="interaction">
    <interactant intactId="EBI-19157865">
        <id>O95232-2</id>
    </interactant>
    <interactant intactId="EBI-744248">
        <id>P40692</id>
        <label>MLH1</label>
    </interactant>
    <organismsDiffer>false</organismsDiffer>
    <experiments>3</experiments>
</comment>
<comment type="subcellular location">
    <subcellularLocation>
        <location evidence="3 4">Nucleus speckle</location>
    </subcellularLocation>
    <text>The subnuclear localization is affected by cisplatin.</text>
</comment>
<comment type="alternative products">
    <event type="alternative splicing"/>
    <isoform>
        <id>O95232-1</id>
        <name>1</name>
        <sequence type="displayed"/>
    </isoform>
    <isoform>
        <id>O95232-2</id>
        <name>2</name>
        <sequence type="described" ref="VSP_018136 VSP_018137"/>
    </isoform>
</comment>
<comment type="tissue specificity">
    <text evidence="3 6">Widely expressed. Highest levels in heart, brain, pancreas, thymus, ovary, small intestine and peripheral blood leukocytes, as well as cerebellum, putamen and pituitary gland. Lowest levels in lung, liver and kidney. Also expressed in fetal tissues, including brain, heart, kidney, thymus and lung.</text>
</comment>
<comment type="PTM">
    <text evidence="4">Phosphorylated in vitro by SRPK1, SRPK2 and CLK1.</text>
</comment>
<comment type="miscellaneous">
    <molecule>Isoform 2</molecule>
    <text evidence="11">May be produced at very low levels due to a premature stop codon in the mRNA, leading to nonsense-mediated mRNA decay.</text>
</comment>
<comment type="similarity">
    <text evidence="11">Belongs to the Luc7 family.</text>
</comment>
<comment type="sequence caution" evidence="11">
    <conflict type="erroneous translation">
        <sequence resource="EMBL-CDS" id="AAC79807"/>
    </conflict>
    <text>Erroneous CDS prediction.</text>
</comment>
<name>LC7L3_HUMAN</name>